<proteinExistence type="inferred from homology"/>
<dbReference type="EC" id="4.1.1.19" evidence="1"/>
<dbReference type="EMBL" id="AE015451">
    <property type="protein sequence ID" value="AAN66194.1"/>
    <property type="molecule type" value="Genomic_DNA"/>
</dbReference>
<dbReference type="RefSeq" id="NP_742730.1">
    <property type="nucleotide sequence ID" value="NC_002947.4"/>
</dbReference>
<dbReference type="RefSeq" id="WP_010951840.1">
    <property type="nucleotide sequence ID" value="NZ_CP169744.1"/>
</dbReference>
<dbReference type="SMR" id="Q88QC7"/>
<dbReference type="STRING" id="160488.PP_0567"/>
<dbReference type="PaxDb" id="160488-PP_0567"/>
<dbReference type="GeneID" id="83677891"/>
<dbReference type="KEGG" id="ppu:PP_0567"/>
<dbReference type="PATRIC" id="fig|160488.4.peg.605"/>
<dbReference type="eggNOG" id="COG1166">
    <property type="taxonomic scope" value="Bacteria"/>
</dbReference>
<dbReference type="HOGENOM" id="CLU_027243_1_0_6"/>
<dbReference type="OrthoDB" id="9802658at2"/>
<dbReference type="PhylomeDB" id="Q88QC7"/>
<dbReference type="BioCyc" id="PPUT160488:G1G01-617-MONOMER"/>
<dbReference type="Proteomes" id="UP000000556">
    <property type="component" value="Chromosome"/>
</dbReference>
<dbReference type="GO" id="GO:0008792">
    <property type="term" value="F:arginine decarboxylase activity"/>
    <property type="evidence" value="ECO:0007669"/>
    <property type="project" value="UniProtKB-UniRule"/>
</dbReference>
<dbReference type="GO" id="GO:0046872">
    <property type="term" value="F:metal ion binding"/>
    <property type="evidence" value="ECO:0007669"/>
    <property type="project" value="UniProtKB-KW"/>
</dbReference>
<dbReference type="GO" id="GO:0006527">
    <property type="term" value="P:arginine catabolic process"/>
    <property type="evidence" value="ECO:0007669"/>
    <property type="project" value="InterPro"/>
</dbReference>
<dbReference type="GO" id="GO:0033388">
    <property type="term" value="P:putrescine biosynthetic process from arginine"/>
    <property type="evidence" value="ECO:0007669"/>
    <property type="project" value="TreeGrafter"/>
</dbReference>
<dbReference type="GO" id="GO:0008295">
    <property type="term" value="P:spermidine biosynthetic process"/>
    <property type="evidence" value="ECO:0007669"/>
    <property type="project" value="UniProtKB-UniRule"/>
</dbReference>
<dbReference type="CDD" id="cd06830">
    <property type="entry name" value="PLPDE_III_ADC"/>
    <property type="match status" value="1"/>
</dbReference>
<dbReference type="FunFam" id="1.10.287.3440:FF:000002">
    <property type="entry name" value="Biosynthetic arginine decarboxylase"/>
    <property type="match status" value="1"/>
</dbReference>
<dbReference type="FunFam" id="3.20.20.10:FF:000001">
    <property type="entry name" value="Biosynthetic arginine decarboxylase"/>
    <property type="match status" value="1"/>
</dbReference>
<dbReference type="Gene3D" id="1.10.287.3440">
    <property type="match status" value="1"/>
</dbReference>
<dbReference type="Gene3D" id="1.20.58.930">
    <property type="match status" value="1"/>
</dbReference>
<dbReference type="Gene3D" id="3.20.20.10">
    <property type="entry name" value="Alanine racemase"/>
    <property type="match status" value="1"/>
</dbReference>
<dbReference type="Gene3D" id="2.40.37.10">
    <property type="entry name" value="Lyase, Ornithine Decarboxylase, Chain A, domain 1"/>
    <property type="match status" value="1"/>
</dbReference>
<dbReference type="HAMAP" id="MF_01417">
    <property type="entry name" value="SpeA"/>
    <property type="match status" value="1"/>
</dbReference>
<dbReference type="InterPro" id="IPR009006">
    <property type="entry name" value="Ala_racemase/Decarboxylase_C"/>
</dbReference>
<dbReference type="InterPro" id="IPR040634">
    <property type="entry name" value="Arg_decarb_HB"/>
</dbReference>
<dbReference type="InterPro" id="IPR041128">
    <property type="entry name" value="Arg_decarbox_C"/>
</dbReference>
<dbReference type="InterPro" id="IPR002985">
    <property type="entry name" value="Arg_decrbxlase"/>
</dbReference>
<dbReference type="InterPro" id="IPR022657">
    <property type="entry name" value="De-COase2_CS"/>
</dbReference>
<dbReference type="InterPro" id="IPR022644">
    <property type="entry name" value="De-COase2_N"/>
</dbReference>
<dbReference type="InterPro" id="IPR000183">
    <property type="entry name" value="Orn/DAP/Arg_de-COase"/>
</dbReference>
<dbReference type="InterPro" id="IPR029066">
    <property type="entry name" value="PLP-binding_barrel"/>
</dbReference>
<dbReference type="NCBIfam" id="NF003763">
    <property type="entry name" value="PRK05354.1"/>
    <property type="match status" value="1"/>
</dbReference>
<dbReference type="NCBIfam" id="TIGR01273">
    <property type="entry name" value="speA"/>
    <property type="match status" value="1"/>
</dbReference>
<dbReference type="PANTHER" id="PTHR43295">
    <property type="entry name" value="ARGININE DECARBOXYLASE"/>
    <property type="match status" value="1"/>
</dbReference>
<dbReference type="PANTHER" id="PTHR43295:SF9">
    <property type="entry name" value="BIOSYNTHETIC ARGININE DECARBOXYLASE"/>
    <property type="match status" value="1"/>
</dbReference>
<dbReference type="Pfam" id="PF17810">
    <property type="entry name" value="Arg_decarb_HB"/>
    <property type="match status" value="1"/>
</dbReference>
<dbReference type="Pfam" id="PF17944">
    <property type="entry name" value="Arg_decarbox_C"/>
    <property type="match status" value="1"/>
</dbReference>
<dbReference type="Pfam" id="PF02784">
    <property type="entry name" value="Orn_Arg_deC_N"/>
    <property type="match status" value="1"/>
</dbReference>
<dbReference type="PIRSF" id="PIRSF001336">
    <property type="entry name" value="Arg_decrbxlase"/>
    <property type="match status" value="1"/>
</dbReference>
<dbReference type="PRINTS" id="PR01180">
    <property type="entry name" value="ARGDCRBXLASE"/>
</dbReference>
<dbReference type="PRINTS" id="PR01179">
    <property type="entry name" value="ODADCRBXLASE"/>
</dbReference>
<dbReference type="SUPFAM" id="SSF50621">
    <property type="entry name" value="Alanine racemase C-terminal domain-like"/>
    <property type="match status" value="1"/>
</dbReference>
<dbReference type="SUPFAM" id="SSF51419">
    <property type="entry name" value="PLP-binding barrel"/>
    <property type="match status" value="1"/>
</dbReference>
<dbReference type="PROSITE" id="PS00879">
    <property type="entry name" value="ODR_DC_2_2"/>
    <property type="match status" value="1"/>
</dbReference>
<accession>Q88QC7</accession>
<organism>
    <name type="scientific">Pseudomonas putida (strain ATCC 47054 / DSM 6125 / CFBP 8728 / NCIMB 11950 / KT2440)</name>
    <dbReference type="NCBI Taxonomy" id="160488"/>
    <lineage>
        <taxon>Bacteria</taxon>
        <taxon>Pseudomonadati</taxon>
        <taxon>Pseudomonadota</taxon>
        <taxon>Gammaproteobacteria</taxon>
        <taxon>Pseudomonadales</taxon>
        <taxon>Pseudomonadaceae</taxon>
        <taxon>Pseudomonas</taxon>
    </lineage>
</organism>
<comment type="function">
    <text evidence="1">Catalyzes the biosynthesis of agmatine from arginine.</text>
</comment>
<comment type="catalytic activity">
    <reaction evidence="1">
        <text>L-arginine + H(+) = agmatine + CO2</text>
        <dbReference type="Rhea" id="RHEA:17641"/>
        <dbReference type="ChEBI" id="CHEBI:15378"/>
        <dbReference type="ChEBI" id="CHEBI:16526"/>
        <dbReference type="ChEBI" id="CHEBI:32682"/>
        <dbReference type="ChEBI" id="CHEBI:58145"/>
        <dbReference type="EC" id="4.1.1.19"/>
    </reaction>
</comment>
<comment type="cofactor">
    <cofactor evidence="1">
        <name>Mg(2+)</name>
        <dbReference type="ChEBI" id="CHEBI:18420"/>
    </cofactor>
</comment>
<comment type="cofactor">
    <cofactor evidence="1">
        <name>pyridoxal 5'-phosphate</name>
        <dbReference type="ChEBI" id="CHEBI:597326"/>
    </cofactor>
</comment>
<comment type="similarity">
    <text evidence="1">Belongs to the Orn/Lys/Arg decarboxylase class-II family. SpeA subfamily.</text>
</comment>
<evidence type="ECO:0000255" key="1">
    <source>
        <dbReference type="HAMAP-Rule" id="MF_01417"/>
    </source>
</evidence>
<keyword id="KW-0210">Decarboxylase</keyword>
<keyword id="KW-0456">Lyase</keyword>
<keyword id="KW-0460">Magnesium</keyword>
<keyword id="KW-0479">Metal-binding</keyword>
<keyword id="KW-0620">Polyamine biosynthesis</keyword>
<keyword id="KW-0663">Pyridoxal phosphate</keyword>
<keyword id="KW-1185">Reference proteome</keyword>
<keyword id="KW-0745">Spermidine biosynthesis</keyword>
<reference key="1">
    <citation type="journal article" date="2002" name="Environ. Microbiol.">
        <title>Complete genome sequence and comparative analysis of the metabolically versatile Pseudomonas putida KT2440.</title>
        <authorList>
            <person name="Nelson K.E."/>
            <person name="Weinel C."/>
            <person name="Paulsen I.T."/>
            <person name="Dodson R.J."/>
            <person name="Hilbert H."/>
            <person name="Martins dos Santos V.A.P."/>
            <person name="Fouts D.E."/>
            <person name="Gill S.R."/>
            <person name="Pop M."/>
            <person name="Holmes M."/>
            <person name="Brinkac L.M."/>
            <person name="Beanan M.J."/>
            <person name="DeBoy R.T."/>
            <person name="Daugherty S.C."/>
            <person name="Kolonay J.F."/>
            <person name="Madupu R."/>
            <person name="Nelson W.C."/>
            <person name="White O."/>
            <person name="Peterson J.D."/>
            <person name="Khouri H.M."/>
            <person name="Hance I."/>
            <person name="Chris Lee P."/>
            <person name="Holtzapple E.K."/>
            <person name="Scanlan D."/>
            <person name="Tran K."/>
            <person name="Moazzez A."/>
            <person name="Utterback T.R."/>
            <person name="Rizzo M."/>
            <person name="Lee K."/>
            <person name="Kosack D."/>
            <person name="Moestl D."/>
            <person name="Wedler H."/>
            <person name="Lauber J."/>
            <person name="Stjepandic D."/>
            <person name="Hoheisel J."/>
            <person name="Straetz M."/>
            <person name="Heim S."/>
            <person name="Kiewitz C."/>
            <person name="Eisen J.A."/>
            <person name="Timmis K.N."/>
            <person name="Duesterhoeft A."/>
            <person name="Tuemmler B."/>
            <person name="Fraser C.M."/>
        </authorList>
    </citation>
    <scope>NUCLEOTIDE SEQUENCE [LARGE SCALE GENOMIC DNA]</scope>
    <source>
        <strain>ATCC 47054 / DSM 6125 / CFBP 8728 / NCIMB 11950 / KT2440</strain>
    </source>
</reference>
<sequence length="637" mass="71043">MSVRRTRKDDGSQWTVADSRSVYGIRHWGAGYFAINEAGRVEVRPNGPQSAPIDLFEQVDELRQSGLSLPLLVRFPDILQDRVRQLTGAFDANIARLEYQSQYTALYPIKVNQQEAVVENIIATQNVSIGLEAGSKPELLAVLALAPKGGTIVCNGYKDREFIRLALMGQKLGHNVFIVIEKESEVALVIEEAAELKVKPQVGLRVRLSSLASSKWADTGGEKSKFGLSAAQLLSVVQRFRDAGLDQGIRLLHFHMGSQIANLADYQHGFKEAIRYYGELRALGLPVDHIDVGGGLGVDYDGTHSRNASSINYDMDDYAGVVVGMLKEFCDAQGLPHPHIFSESGRSLTAHHAMLVIQVTDVEKHNDDVPTIENKEALPETVQWLVDLLGPTDIEMVTETYWRATHYMGDVAAQYADGKLSLGEKALAEQCYFAVCRRLHNSLKARQRSHRQVLDELNDKLADKYICNFSVFQSLPDTWAIGQVLPIIPLHRLDEEPMRRAVLQDLTCDSDGKINQYVDEQSIETSMPVHAVKEGEDYLLGVFLVGAYQEILGDMHNLFGDTDSVNIYQNADGSVYHAGIETHDTIEDMLRYVHLSPEELMTHYRDKVASAKITARERTQYLDALRLGLTRSSYLSS</sequence>
<feature type="chain" id="PRO_0000149972" description="Biosynthetic arginine decarboxylase">
    <location>
        <begin position="1"/>
        <end position="637"/>
    </location>
</feature>
<feature type="binding site" evidence="1">
    <location>
        <begin position="290"/>
        <end position="300"/>
    </location>
    <ligand>
        <name>substrate</name>
    </ligand>
</feature>
<feature type="modified residue" description="N6-(pyridoxal phosphate)lysine" evidence="1">
    <location>
        <position position="110"/>
    </location>
</feature>
<protein>
    <recommendedName>
        <fullName evidence="1">Biosynthetic arginine decarboxylase</fullName>
        <shortName evidence="1">ADC</shortName>
        <ecNumber evidence="1">4.1.1.19</ecNumber>
    </recommendedName>
</protein>
<name>SPEA_PSEPK</name>
<gene>
    <name evidence="1" type="primary">speA</name>
    <name type="ordered locus">PP_0567</name>
</gene>